<protein>
    <recommendedName>
        <fullName evidence="1">Membrane protein insertase YidC</fullName>
    </recommendedName>
    <alternativeName>
        <fullName evidence="1">Foldase YidC</fullName>
    </alternativeName>
    <alternativeName>
        <fullName evidence="1">Membrane integrase YidC</fullName>
    </alternativeName>
    <alternativeName>
        <fullName evidence="1">Membrane protein YidC</fullName>
    </alternativeName>
</protein>
<proteinExistence type="inferred from homology"/>
<sequence>MDIKRIILYVIVALLAIALFNAWQRDYPPTPKPTPTVEQPTANGDHPTAYTPPAFTPGAAEKTKKAGTIAFTSKVPEARLITVRTDVLDVEIDTQGGNIVSAKLPKYPVSLEEKQTPVQILSGEPNELYIAQSGLTNGNGQPTTVQFESEKKQYVLENGQNQLIVQLTGRAPDGLLVTKTYTFHRDDYAIHLAYQVKNNTSKPWQGSLYTQITRRQPPTEHHHFYVRSYNGASMGSPQTPYEKLSYESLDKQNIDRTSQSGWIAMQQHYFLSAWVPGNPELTYHYYSHVIPASDEPNVYVVGFVSPQMNVAAGSEAATHATLYVGPEIAKRLKGLAPGLERTIDYGWLWPISMLLFWILSAVHAVVKNWGWSIIITTILIKIVFYWFSAKSFRSMARMREMQPRIQALKERHGDDRQALSRATMELYRKEKINPLGGCLPMLIQVPVFIAFYYVIIESVQLRQAPFIFWIHDLSVKDPYYILPIIMGLSMLAQQWVSPTSPDPTQQKMMWILPVIFTVFFINFPAGLVLYWITNNVVQTLQQWYVNKTYESHKAKLKARRARKRKR</sequence>
<organism>
    <name type="scientific">Coxiella burnetii (strain RSA 331 / Henzerling II)</name>
    <dbReference type="NCBI Taxonomy" id="360115"/>
    <lineage>
        <taxon>Bacteria</taxon>
        <taxon>Pseudomonadati</taxon>
        <taxon>Pseudomonadota</taxon>
        <taxon>Gammaproteobacteria</taxon>
        <taxon>Legionellales</taxon>
        <taxon>Coxiellaceae</taxon>
        <taxon>Coxiella</taxon>
    </lineage>
</organism>
<comment type="function">
    <text evidence="1">Required for the insertion and/or proper folding and/or complex formation of integral membrane proteins into the membrane. Involved in integration of membrane proteins that insert both dependently and independently of the Sec translocase complex, as well as at least some lipoproteins. Aids folding of multispanning membrane proteins.</text>
</comment>
<comment type="subunit">
    <text evidence="1">Interacts with the Sec translocase complex via SecD. Specifically interacts with transmembrane segments of nascent integral membrane proteins during membrane integration.</text>
</comment>
<comment type="subcellular location">
    <subcellularLocation>
        <location evidence="1">Cell inner membrane</location>
        <topology evidence="1">Multi-pass membrane protein</topology>
    </subcellularLocation>
</comment>
<comment type="similarity">
    <text evidence="1">Belongs to the OXA1/ALB3/YidC family. Type 1 subfamily.</text>
</comment>
<accession>A9NBA5</accession>
<dbReference type="EMBL" id="CP000890">
    <property type="protein sequence ID" value="ABX77649.1"/>
    <property type="molecule type" value="Genomic_DNA"/>
</dbReference>
<dbReference type="RefSeq" id="WP_010958538.1">
    <property type="nucleotide sequence ID" value="NC_010117.1"/>
</dbReference>
<dbReference type="SMR" id="A9NBA5"/>
<dbReference type="KEGG" id="cbs:COXBURSA331_A2122"/>
<dbReference type="HOGENOM" id="CLU_016535_3_0_6"/>
<dbReference type="GO" id="GO:0005886">
    <property type="term" value="C:plasma membrane"/>
    <property type="evidence" value="ECO:0007669"/>
    <property type="project" value="UniProtKB-SubCell"/>
</dbReference>
<dbReference type="GO" id="GO:0032977">
    <property type="term" value="F:membrane insertase activity"/>
    <property type="evidence" value="ECO:0007669"/>
    <property type="project" value="InterPro"/>
</dbReference>
<dbReference type="GO" id="GO:0051205">
    <property type="term" value="P:protein insertion into membrane"/>
    <property type="evidence" value="ECO:0007669"/>
    <property type="project" value="TreeGrafter"/>
</dbReference>
<dbReference type="GO" id="GO:0015031">
    <property type="term" value="P:protein transport"/>
    <property type="evidence" value="ECO:0007669"/>
    <property type="project" value="UniProtKB-KW"/>
</dbReference>
<dbReference type="CDD" id="cd20070">
    <property type="entry name" value="5TM_YidC_Alb3"/>
    <property type="match status" value="1"/>
</dbReference>
<dbReference type="CDD" id="cd19961">
    <property type="entry name" value="EcYidC-like_peri"/>
    <property type="match status" value="1"/>
</dbReference>
<dbReference type="Gene3D" id="2.70.98.90">
    <property type="match status" value="1"/>
</dbReference>
<dbReference type="HAMAP" id="MF_01810">
    <property type="entry name" value="YidC_type1"/>
    <property type="match status" value="1"/>
</dbReference>
<dbReference type="InterPro" id="IPR019998">
    <property type="entry name" value="Membr_insert_YidC"/>
</dbReference>
<dbReference type="InterPro" id="IPR028053">
    <property type="entry name" value="Membr_insert_YidC_N"/>
</dbReference>
<dbReference type="InterPro" id="IPR001708">
    <property type="entry name" value="YidC/ALB3/OXA1/COX18"/>
</dbReference>
<dbReference type="InterPro" id="IPR028055">
    <property type="entry name" value="YidC/Oxa/ALB_C"/>
</dbReference>
<dbReference type="InterPro" id="IPR047196">
    <property type="entry name" value="YidC_ALB_C"/>
</dbReference>
<dbReference type="InterPro" id="IPR038221">
    <property type="entry name" value="YidC_periplasmic_sf"/>
</dbReference>
<dbReference type="NCBIfam" id="NF002352">
    <property type="entry name" value="PRK01318.1-3"/>
    <property type="match status" value="1"/>
</dbReference>
<dbReference type="NCBIfam" id="TIGR03593">
    <property type="entry name" value="yidC_nterm"/>
    <property type="match status" value="1"/>
</dbReference>
<dbReference type="NCBIfam" id="TIGR03592">
    <property type="entry name" value="yidC_oxa1_cterm"/>
    <property type="match status" value="1"/>
</dbReference>
<dbReference type="PANTHER" id="PTHR12428:SF65">
    <property type="entry name" value="CYTOCHROME C OXIDASE ASSEMBLY PROTEIN COX18, MITOCHONDRIAL"/>
    <property type="match status" value="1"/>
</dbReference>
<dbReference type="PANTHER" id="PTHR12428">
    <property type="entry name" value="OXA1"/>
    <property type="match status" value="1"/>
</dbReference>
<dbReference type="Pfam" id="PF02096">
    <property type="entry name" value="60KD_IMP"/>
    <property type="match status" value="1"/>
</dbReference>
<dbReference type="Pfam" id="PF14849">
    <property type="entry name" value="YidC_periplas"/>
    <property type="match status" value="1"/>
</dbReference>
<dbReference type="PRINTS" id="PR00701">
    <property type="entry name" value="60KDINNERMP"/>
</dbReference>
<dbReference type="PRINTS" id="PR01900">
    <property type="entry name" value="YIDCPROTEIN"/>
</dbReference>
<feature type="chain" id="PRO_1000088250" description="Membrane protein insertase YidC">
    <location>
        <begin position="1"/>
        <end position="566"/>
    </location>
</feature>
<feature type="transmembrane region" description="Helical" evidence="1">
    <location>
        <begin position="3"/>
        <end position="23"/>
    </location>
</feature>
<feature type="transmembrane region" description="Helical" evidence="1">
    <location>
        <begin position="346"/>
        <end position="366"/>
    </location>
</feature>
<feature type="transmembrane region" description="Helical" evidence="1">
    <location>
        <begin position="369"/>
        <end position="389"/>
    </location>
</feature>
<feature type="transmembrane region" description="Helical" evidence="1">
    <location>
        <begin position="436"/>
        <end position="456"/>
    </location>
</feature>
<feature type="transmembrane region" description="Helical" evidence="1">
    <location>
        <begin position="509"/>
        <end position="529"/>
    </location>
</feature>
<evidence type="ECO:0000255" key="1">
    <source>
        <dbReference type="HAMAP-Rule" id="MF_01810"/>
    </source>
</evidence>
<gene>
    <name evidence="1" type="primary">yidC</name>
    <name type="ordered locus">COXBURSA331_A2122</name>
</gene>
<reference key="1">
    <citation type="submission" date="2007-11" db="EMBL/GenBank/DDBJ databases">
        <title>Genome sequencing of phylogenetically and phenotypically diverse Coxiella burnetii isolates.</title>
        <authorList>
            <person name="Seshadri R."/>
            <person name="Samuel J.E."/>
        </authorList>
    </citation>
    <scope>NUCLEOTIDE SEQUENCE [LARGE SCALE GENOMIC DNA]</scope>
    <source>
        <strain>RSA 331 / Henzerling II</strain>
    </source>
</reference>
<keyword id="KW-0997">Cell inner membrane</keyword>
<keyword id="KW-1003">Cell membrane</keyword>
<keyword id="KW-0143">Chaperone</keyword>
<keyword id="KW-0472">Membrane</keyword>
<keyword id="KW-0653">Protein transport</keyword>
<keyword id="KW-0812">Transmembrane</keyword>
<keyword id="KW-1133">Transmembrane helix</keyword>
<keyword id="KW-0813">Transport</keyword>
<name>YIDC_COXBR</name>